<name>ATP6_SALSV</name>
<accession>B4TN37</accession>
<dbReference type="EMBL" id="CP001127">
    <property type="protein sequence ID" value="ACF93030.1"/>
    <property type="molecule type" value="Genomic_DNA"/>
</dbReference>
<dbReference type="RefSeq" id="WP_000135632.1">
    <property type="nucleotide sequence ID" value="NC_011094.1"/>
</dbReference>
<dbReference type="SMR" id="B4TN37"/>
<dbReference type="KEGG" id="sew:SeSA_A4081"/>
<dbReference type="HOGENOM" id="CLU_041018_1_0_6"/>
<dbReference type="Proteomes" id="UP000001865">
    <property type="component" value="Chromosome"/>
</dbReference>
<dbReference type="GO" id="GO:0005886">
    <property type="term" value="C:plasma membrane"/>
    <property type="evidence" value="ECO:0007669"/>
    <property type="project" value="UniProtKB-SubCell"/>
</dbReference>
<dbReference type="GO" id="GO:0045259">
    <property type="term" value="C:proton-transporting ATP synthase complex"/>
    <property type="evidence" value="ECO:0007669"/>
    <property type="project" value="UniProtKB-KW"/>
</dbReference>
<dbReference type="GO" id="GO:0046933">
    <property type="term" value="F:proton-transporting ATP synthase activity, rotational mechanism"/>
    <property type="evidence" value="ECO:0007669"/>
    <property type="project" value="UniProtKB-UniRule"/>
</dbReference>
<dbReference type="GO" id="GO:0042777">
    <property type="term" value="P:proton motive force-driven plasma membrane ATP synthesis"/>
    <property type="evidence" value="ECO:0007669"/>
    <property type="project" value="TreeGrafter"/>
</dbReference>
<dbReference type="CDD" id="cd00310">
    <property type="entry name" value="ATP-synt_Fo_a_6"/>
    <property type="match status" value="1"/>
</dbReference>
<dbReference type="FunFam" id="1.20.120.220:FF:000002">
    <property type="entry name" value="ATP synthase subunit a"/>
    <property type="match status" value="1"/>
</dbReference>
<dbReference type="Gene3D" id="1.20.120.220">
    <property type="entry name" value="ATP synthase, F0 complex, subunit A"/>
    <property type="match status" value="1"/>
</dbReference>
<dbReference type="HAMAP" id="MF_01393">
    <property type="entry name" value="ATP_synth_a_bact"/>
    <property type="match status" value="1"/>
</dbReference>
<dbReference type="InterPro" id="IPR045082">
    <property type="entry name" value="ATP_syn_F0_a_bact/chloroplast"/>
</dbReference>
<dbReference type="InterPro" id="IPR000568">
    <property type="entry name" value="ATP_synth_F0_asu"/>
</dbReference>
<dbReference type="InterPro" id="IPR023011">
    <property type="entry name" value="ATP_synth_F0_asu_AS"/>
</dbReference>
<dbReference type="InterPro" id="IPR035908">
    <property type="entry name" value="F0_ATP_A_sf"/>
</dbReference>
<dbReference type="NCBIfam" id="TIGR01131">
    <property type="entry name" value="ATP_synt_6_or_A"/>
    <property type="match status" value="1"/>
</dbReference>
<dbReference type="NCBIfam" id="NF004477">
    <property type="entry name" value="PRK05815.1-1"/>
    <property type="match status" value="1"/>
</dbReference>
<dbReference type="PANTHER" id="PTHR42823">
    <property type="entry name" value="ATP SYNTHASE SUBUNIT A, CHLOROPLASTIC"/>
    <property type="match status" value="1"/>
</dbReference>
<dbReference type="PANTHER" id="PTHR42823:SF3">
    <property type="entry name" value="ATP SYNTHASE SUBUNIT A, CHLOROPLASTIC"/>
    <property type="match status" value="1"/>
</dbReference>
<dbReference type="Pfam" id="PF00119">
    <property type="entry name" value="ATP-synt_A"/>
    <property type="match status" value="1"/>
</dbReference>
<dbReference type="PRINTS" id="PR00123">
    <property type="entry name" value="ATPASEA"/>
</dbReference>
<dbReference type="SUPFAM" id="SSF81336">
    <property type="entry name" value="F1F0 ATP synthase subunit A"/>
    <property type="match status" value="1"/>
</dbReference>
<dbReference type="PROSITE" id="PS00449">
    <property type="entry name" value="ATPASE_A"/>
    <property type="match status" value="1"/>
</dbReference>
<feature type="chain" id="PRO_0000362443" description="ATP synthase subunit a">
    <location>
        <begin position="1"/>
        <end position="271"/>
    </location>
</feature>
<feature type="transmembrane region" description="Helical" evidence="1">
    <location>
        <begin position="38"/>
        <end position="58"/>
    </location>
</feature>
<feature type="transmembrane region" description="Helical" evidence="1">
    <location>
        <begin position="100"/>
        <end position="120"/>
    </location>
</feature>
<feature type="transmembrane region" description="Helical" evidence="1">
    <location>
        <begin position="146"/>
        <end position="166"/>
    </location>
</feature>
<feature type="transmembrane region" description="Helical" evidence="1">
    <location>
        <begin position="220"/>
        <end position="240"/>
    </location>
</feature>
<feature type="transmembrane region" description="Helical" evidence="1">
    <location>
        <begin position="242"/>
        <end position="262"/>
    </location>
</feature>
<evidence type="ECO:0000255" key="1">
    <source>
        <dbReference type="HAMAP-Rule" id="MF_01393"/>
    </source>
</evidence>
<comment type="function">
    <text evidence="1">Key component of the proton channel; it plays a direct role in the translocation of protons across the membrane.</text>
</comment>
<comment type="subunit">
    <text evidence="1">F-type ATPases have 2 components, CF(1) - the catalytic core - and CF(0) - the membrane proton channel. CF(1) has five subunits: alpha(3), beta(3), gamma(1), delta(1), epsilon(1). CF(0) has three main subunits: a(1), b(2) and c(9-12). The alpha and beta chains form an alternating ring which encloses part of the gamma chain. CF(1) is attached to CF(0) by a central stalk formed by the gamma and epsilon chains, while a peripheral stalk is formed by the delta and b chains.</text>
</comment>
<comment type="subcellular location">
    <subcellularLocation>
        <location evidence="1">Cell inner membrane</location>
        <topology evidence="1">Multi-pass membrane protein</topology>
    </subcellularLocation>
</comment>
<comment type="similarity">
    <text evidence="1">Belongs to the ATPase A chain family.</text>
</comment>
<gene>
    <name evidence="1" type="primary">atpB</name>
    <name type="ordered locus">SeSA_A4081</name>
</gene>
<organism>
    <name type="scientific">Salmonella schwarzengrund (strain CVM19633)</name>
    <dbReference type="NCBI Taxonomy" id="439843"/>
    <lineage>
        <taxon>Bacteria</taxon>
        <taxon>Pseudomonadati</taxon>
        <taxon>Pseudomonadota</taxon>
        <taxon>Gammaproteobacteria</taxon>
        <taxon>Enterobacterales</taxon>
        <taxon>Enterobacteriaceae</taxon>
        <taxon>Salmonella</taxon>
    </lineage>
</organism>
<proteinExistence type="inferred from homology"/>
<reference key="1">
    <citation type="journal article" date="2011" name="J. Bacteriol.">
        <title>Comparative genomics of 28 Salmonella enterica isolates: evidence for CRISPR-mediated adaptive sublineage evolution.</title>
        <authorList>
            <person name="Fricke W.F."/>
            <person name="Mammel M.K."/>
            <person name="McDermott P.F."/>
            <person name="Tartera C."/>
            <person name="White D.G."/>
            <person name="Leclerc J.E."/>
            <person name="Ravel J."/>
            <person name="Cebula T.A."/>
        </authorList>
    </citation>
    <scope>NUCLEOTIDE SEQUENCE [LARGE SCALE GENOMIC DNA]</scope>
    <source>
        <strain>CVM19633</strain>
    </source>
</reference>
<sequence length="271" mass="30417">MASENMTPQEYIGHHLNNLQLDLRTFSLVDPQNPPATFWTLNIDSMFFSVVLGLLFLVMFRSVAKKATSGVPGKFQTAIELIVGFVHGSVKDMYHGKSKLIAPLALTIFVWVFLMNLMDLLPIDLLPYIAEHWLGLPATRVVPSADVNITLSMALGVFILILFYSIKMKGIGGFAKELTLQPFNHWAFIPVNLILEGVSLLSKPVSLGLRLFGNMYAGELIFILIAGLLPWWSQWILNVPWAIFHILIITLQAFIFMVLTIVYLSMASEEH</sequence>
<keyword id="KW-0066">ATP synthesis</keyword>
<keyword id="KW-0997">Cell inner membrane</keyword>
<keyword id="KW-1003">Cell membrane</keyword>
<keyword id="KW-0138">CF(0)</keyword>
<keyword id="KW-0375">Hydrogen ion transport</keyword>
<keyword id="KW-0406">Ion transport</keyword>
<keyword id="KW-0472">Membrane</keyword>
<keyword id="KW-0812">Transmembrane</keyword>
<keyword id="KW-1133">Transmembrane helix</keyword>
<keyword id="KW-0813">Transport</keyword>
<protein>
    <recommendedName>
        <fullName evidence="1">ATP synthase subunit a</fullName>
    </recommendedName>
    <alternativeName>
        <fullName evidence="1">ATP synthase F0 sector subunit a</fullName>
    </alternativeName>
    <alternativeName>
        <fullName evidence="1">F-ATPase subunit 6</fullName>
    </alternativeName>
</protein>